<sequence length="389" mass="42882">MLLALAQWLQGDASFLRLFTYLTFRAVMATITALVIGLVCGPWVIRKLTQMKVGQAVRKDGPQTHLVKSGTPTMGGVLILIGIAVATLLWGDLTNRFIWIVMLVTFGFGVIGWVDDYRKVVYKDPRGMSSREKYFWQSVIGLFAAVYLAFSVSEANNVRVFDLFMAWVRSGLSMGLPARADLMLPFLKSISYPLGVWGFIALTYFVIVGASNAVNLTDGLDGLVIMPVVLVGASLGVFAYVMGSAVYSKYLLFPHIPGAGELLIFCSAMGGAGLAFLWYNTHPAQVFMGDVGALALGGALGTVAVIVRQEIVLFIMGGIFVAETLSVMLQVTWFKYTKKRYGEGRRIFKMAPLHHHFELSGWKETQVVVRFWIITLMLCLFGLSTLKLR</sequence>
<feature type="chain" id="PRO_1000002948" description="Phospho-N-acetylmuramoyl-pentapeptide-transferase">
    <location>
        <begin position="1"/>
        <end position="389"/>
    </location>
</feature>
<feature type="transmembrane region" description="Helical" evidence="1">
    <location>
        <begin position="25"/>
        <end position="45"/>
    </location>
</feature>
<feature type="transmembrane region" description="Helical" evidence="1">
    <location>
        <begin position="73"/>
        <end position="93"/>
    </location>
</feature>
<feature type="transmembrane region" description="Helical" evidence="1">
    <location>
        <begin position="97"/>
        <end position="117"/>
    </location>
</feature>
<feature type="transmembrane region" description="Helical" evidence="1">
    <location>
        <begin position="135"/>
        <end position="155"/>
    </location>
</feature>
<feature type="transmembrane region" description="Helical" evidence="1">
    <location>
        <begin position="190"/>
        <end position="210"/>
    </location>
</feature>
<feature type="transmembrane region" description="Helical" evidence="1">
    <location>
        <begin position="222"/>
        <end position="242"/>
    </location>
</feature>
<feature type="transmembrane region" description="Helical" evidence="1">
    <location>
        <begin position="258"/>
        <end position="278"/>
    </location>
</feature>
<feature type="transmembrane region" description="Helical" evidence="1">
    <location>
        <begin position="286"/>
        <end position="306"/>
    </location>
</feature>
<feature type="transmembrane region" description="Helical" evidence="1">
    <location>
        <begin position="311"/>
        <end position="331"/>
    </location>
</feature>
<feature type="transmembrane region" description="Helical" evidence="1">
    <location>
        <begin position="366"/>
        <end position="386"/>
    </location>
</feature>
<keyword id="KW-0131">Cell cycle</keyword>
<keyword id="KW-0132">Cell division</keyword>
<keyword id="KW-0997">Cell inner membrane</keyword>
<keyword id="KW-1003">Cell membrane</keyword>
<keyword id="KW-0133">Cell shape</keyword>
<keyword id="KW-0961">Cell wall biogenesis/degradation</keyword>
<keyword id="KW-0460">Magnesium</keyword>
<keyword id="KW-0472">Membrane</keyword>
<keyword id="KW-0479">Metal-binding</keyword>
<keyword id="KW-0573">Peptidoglycan synthesis</keyword>
<keyword id="KW-0808">Transferase</keyword>
<keyword id="KW-0812">Transmembrane</keyword>
<keyword id="KW-1133">Transmembrane helix</keyword>
<dbReference type="EC" id="2.7.8.13" evidence="1"/>
<dbReference type="EMBL" id="CP000546">
    <property type="protein sequence ID" value="ABN03883.1"/>
    <property type="molecule type" value="Genomic_DNA"/>
</dbReference>
<dbReference type="RefSeq" id="WP_004194370.1">
    <property type="nucleotide sequence ID" value="NC_008836.1"/>
</dbReference>
<dbReference type="SMR" id="A2S5U8"/>
<dbReference type="GeneID" id="92980246"/>
<dbReference type="KEGG" id="bml:BMA10229_A1334"/>
<dbReference type="HOGENOM" id="CLU_023982_0_0_4"/>
<dbReference type="UniPathway" id="UPA00219"/>
<dbReference type="Proteomes" id="UP000002283">
    <property type="component" value="Chromosome I"/>
</dbReference>
<dbReference type="GO" id="GO:0005886">
    <property type="term" value="C:plasma membrane"/>
    <property type="evidence" value="ECO:0007669"/>
    <property type="project" value="UniProtKB-SubCell"/>
</dbReference>
<dbReference type="GO" id="GO:0046872">
    <property type="term" value="F:metal ion binding"/>
    <property type="evidence" value="ECO:0007669"/>
    <property type="project" value="UniProtKB-KW"/>
</dbReference>
<dbReference type="GO" id="GO:0008963">
    <property type="term" value="F:phospho-N-acetylmuramoyl-pentapeptide-transferase activity"/>
    <property type="evidence" value="ECO:0007669"/>
    <property type="project" value="UniProtKB-UniRule"/>
</dbReference>
<dbReference type="GO" id="GO:0051992">
    <property type="term" value="F:UDP-N-acetylmuramoyl-L-alanyl-D-glutamyl-meso-2,6-diaminopimelyl-D-alanyl-D-alanine:undecaprenyl-phosphate transferase activity"/>
    <property type="evidence" value="ECO:0007669"/>
    <property type="project" value="RHEA"/>
</dbReference>
<dbReference type="GO" id="GO:0051301">
    <property type="term" value="P:cell division"/>
    <property type="evidence" value="ECO:0007669"/>
    <property type="project" value="UniProtKB-KW"/>
</dbReference>
<dbReference type="GO" id="GO:0071555">
    <property type="term" value="P:cell wall organization"/>
    <property type="evidence" value="ECO:0007669"/>
    <property type="project" value="UniProtKB-KW"/>
</dbReference>
<dbReference type="GO" id="GO:0009252">
    <property type="term" value="P:peptidoglycan biosynthetic process"/>
    <property type="evidence" value="ECO:0007669"/>
    <property type="project" value="UniProtKB-UniRule"/>
</dbReference>
<dbReference type="GO" id="GO:0008360">
    <property type="term" value="P:regulation of cell shape"/>
    <property type="evidence" value="ECO:0007669"/>
    <property type="project" value="UniProtKB-KW"/>
</dbReference>
<dbReference type="CDD" id="cd06852">
    <property type="entry name" value="GT_MraY"/>
    <property type="match status" value="1"/>
</dbReference>
<dbReference type="HAMAP" id="MF_00038">
    <property type="entry name" value="MraY"/>
    <property type="match status" value="1"/>
</dbReference>
<dbReference type="InterPro" id="IPR000715">
    <property type="entry name" value="Glycosyl_transferase_4"/>
</dbReference>
<dbReference type="InterPro" id="IPR003524">
    <property type="entry name" value="PNAcMuramoyl-5peptid_Trfase"/>
</dbReference>
<dbReference type="InterPro" id="IPR018480">
    <property type="entry name" value="PNAcMuramoyl-5peptid_Trfase_CS"/>
</dbReference>
<dbReference type="NCBIfam" id="TIGR00445">
    <property type="entry name" value="mraY"/>
    <property type="match status" value="1"/>
</dbReference>
<dbReference type="PANTHER" id="PTHR22926">
    <property type="entry name" value="PHOSPHO-N-ACETYLMURAMOYL-PENTAPEPTIDE-TRANSFERASE"/>
    <property type="match status" value="1"/>
</dbReference>
<dbReference type="PANTHER" id="PTHR22926:SF5">
    <property type="entry name" value="PHOSPHO-N-ACETYLMURAMOYL-PENTAPEPTIDE-TRANSFERASE HOMOLOG"/>
    <property type="match status" value="1"/>
</dbReference>
<dbReference type="Pfam" id="PF00953">
    <property type="entry name" value="Glycos_transf_4"/>
    <property type="match status" value="1"/>
</dbReference>
<dbReference type="Pfam" id="PF10555">
    <property type="entry name" value="MraY_sig1"/>
    <property type="match status" value="1"/>
</dbReference>
<dbReference type="PROSITE" id="PS01347">
    <property type="entry name" value="MRAY_1"/>
    <property type="match status" value="1"/>
</dbReference>
<dbReference type="PROSITE" id="PS01348">
    <property type="entry name" value="MRAY_2"/>
    <property type="match status" value="1"/>
</dbReference>
<proteinExistence type="inferred from homology"/>
<comment type="function">
    <text evidence="1">Catalyzes the initial step of the lipid cycle reactions in the biosynthesis of the cell wall peptidoglycan: transfers peptidoglycan precursor phospho-MurNAc-pentapeptide from UDP-MurNAc-pentapeptide onto the lipid carrier undecaprenyl phosphate, yielding undecaprenyl-pyrophosphoryl-MurNAc-pentapeptide, known as lipid I.</text>
</comment>
<comment type="catalytic activity">
    <reaction evidence="1">
        <text>UDP-N-acetyl-alpha-D-muramoyl-L-alanyl-gamma-D-glutamyl-meso-2,6-diaminopimeloyl-D-alanyl-D-alanine + di-trans,octa-cis-undecaprenyl phosphate = di-trans,octa-cis-undecaprenyl diphospho-N-acetyl-alpha-D-muramoyl-L-alanyl-D-glutamyl-meso-2,6-diaminopimeloyl-D-alanyl-D-alanine + UMP</text>
        <dbReference type="Rhea" id="RHEA:28386"/>
        <dbReference type="ChEBI" id="CHEBI:57865"/>
        <dbReference type="ChEBI" id="CHEBI:60392"/>
        <dbReference type="ChEBI" id="CHEBI:61386"/>
        <dbReference type="ChEBI" id="CHEBI:61387"/>
        <dbReference type="EC" id="2.7.8.13"/>
    </reaction>
</comment>
<comment type="cofactor">
    <cofactor evidence="1">
        <name>Mg(2+)</name>
        <dbReference type="ChEBI" id="CHEBI:18420"/>
    </cofactor>
</comment>
<comment type="pathway">
    <text evidence="1">Cell wall biogenesis; peptidoglycan biosynthesis.</text>
</comment>
<comment type="subcellular location">
    <subcellularLocation>
        <location evidence="1">Cell inner membrane</location>
        <topology evidence="1">Multi-pass membrane protein</topology>
    </subcellularLocation>
</comment>
<comment type="similarity">
    <text evidence="1">Belongs to the glycosyltransferase 4 family. MraY subfamily.</text>
</comment>
<reference key="1">
    <citation type="journal article" date="2010" name="Genome Biol. Evol.">
        <title>Continuing evolution of Burkholderia mallei through genome reduction and large-scale rearrangements.</title>
        <authorList>
            <person name="Losada L."/>
            <person name="Ronning C.M."/>
            <person name="DeShazer D."/>
            <person name="Woods D."/>
            <person name="Fedorova N."/>
            <person name="Kim H.S."/>
            <person name="Shabalina S.A."/>
            <person name="Pearson T.R."/>
            <person name="Brinkac L."/>
            <person name="Tan P."/>
            <person name="Nandi T."/>
            <person name="Crabtree J."/>
            <person name="Badger J."/>
            <person name="Beckstrom-Sternberg S."/>
            <person name="Saqib M."/>
            <person name="Schutzer S.E."/>
            <person name="Keim P."/>
            <person name="Nierman W.C."/>
        </authorList>
    </citation>
    <scope>NUCLEOTIDE SEQUENCE [LARGE SCALE GENOMIC DNA]</scope>
    <source>
        <strain>NCTC 10229</strain>
    </source>
</reference>
<accession>A2S5U8</accession>
<evidence type="ECO:0000255" key="1">
    <source>
        <dbReference type="HAMAP-Rule" id="MF_00038"/>
    </source>
</evidence>
<gene>
    <name evidence="1" type="primary">mraY</name>
    <name type="ordered locus">BMA10229_A1334</name>
</gene>
<name>MRAY_BURM9</name>
<organism>
    <name type="scientific">Burkholderia mallei (strain NCTC 10229)</name>
    <dbReference type="NCBI Taxonomy" id="412022"/>
    <lineage>
        <taxon>Bacteria</taxon>
        <taxon>Pseudomonadati</taxon>
        <taxon>Pseudomonadota</taxon>
        <taxon>Betaproteobacteria</taxon>
        <taxon>Burkholderiales</taxon>
        <taxon>Burkholderiaceae</taxon>
        <taxon>Burkholderia</taxon>
        <taxon>pseudomallei group</taxon>
    </lineage>
</organism>
<protein>
    <recommendedName>
        <fullName evidence="1">Phospho-N-acetylmuramoyl-pentapeptide-transferase</fullName>
        <ecNumber evidence="1">2.7.8.13</ecNumber>
    </recommendedName>
    <alternativeName>
        <fullName evidence="1">UDP-MurNAc-pentapeptide phosphotransferase</fullName>
    </alternativeName>
</protein>